<protein>
    <recommendedName>
        <fullName evidence="3">Uncharacterized protein OTO1</fullName>
    </recommendedName>
    <alternativeName>
        <fullName evidence="2">ORFan toxic when overexpressed protein 1</fullName>
    </alternativeName>
</protein>
<gene>
    <name evidence="2" type="primary">OTO1</name>
    <name evidence="4" type="ordered locus">YGR227C-A</name>
    <name evidence="2" type="ORF">sORF2</name>
</gene>
<feature type="chain" id="PRO_0000455987" description="Uncharacterized protein OTO1">
    <location>
        <begin position="1"/>
        <end position="57"/>
    </location>
</feature>
<accession>A0A8D9PH56</accession>
<reference key="1">
    <citation type="journal article" date="1997" name="Nature">
        <title>The nucleotide sequence of Saccharomyces cerevisiae chromosome VII.</title>
        <authorList>
            <person name="Tettelin H."/>
            <person name="Agostoni-Carbone M.L."/>
            <person name="Albermann K."/>
            <person name="Albers M."/>
            <person name="Arroyo J."/>
            <person name="Backes U."/>
            <person name="Barreiros T."/>
            <person name="Bertani I."/>
            <person name="Bjourson A.J."/>
            <person name="Brueckner M."/>
            <person name="Bruschi C.V."/>
            <person name="Carignani G."/>
            <person name="Castagnoli L."/>
            <person name="Cerdan E."/>
            <person name="Clemente M.L."/>
            <person name="Coblenz A."/>
            <person name="Coglievina M."/>
            <person name="Coissac E."/>
            <person name="Defoor E."/>
            <person name="Del Bino S."/>
            <person name="Delius H."/>
            <person name="Delneri D."/>
            <person name="de Wergifosse P."/>
            <person name="Dujon B."/>
            <person name="Durand P."/>
            <person name="Entian K.-D."/>
            <person name="Eraso P."/>
            <person name="Escribano V."/>
            <person name="Fabiani L."/>
            <person name="Fartmann B."/>
            <person name="Feroli F."/>
            <person name="Feuermann M."/>
            <person name="Frontali L."/>
            <person name="Garcia-Gonzalez M."/>
            <person name="Garcia-Saez M.I."/>
            <person name="Goffeau A."/>
            <person name="Guerreiro P."/>
            <person name="Hani J."/>
            <person name="Hansen M."/>
            <person name="Hebling U."/>
            <person name="Hernandez K."/>
            <person name="Heumann K."/>
            <person name="Hilger F."/>
            <person name="Hofmann B."/>
            <person name="Indge K.J."/>
            <person name="James C.M."/>
            <person name="Klima R."/>
            <person name="Koetter P."/>
            <person name="Kramer B."/>
            <person name="Kramer W."/>
            <person name="Lauquin G."/>
            <person name="Leuther H."/>
            <person name="Louis E.J."/>
            <person name="Maillier E."/>
            <person name="Marconi A."/>
            <person name="Martegani E."/>
            <person name="Mazon M.J."/>
            <person name="Mazzoni C."/>
            <person name="McReynolds A.D.K."/>
            <person name="Melchioretto P."/>
            <person name="Mewes H.-W."/>
            <person name="Minenkova O."/>
            <person name="Mueller-Auer S."/>
            <person name="Nawrocki A."/>
            <person name="Netter P."/>
            <person name="Neu R."/>
            <person name="Nombela C."/>
            <person name="Oliver S.G."/>
            <person name="Panzeri L."/>
            <person name="Paoluzi S."/>
            <person name="Plevani P."/>
            <person name="Portetelle D."/>
            <person name="Portillo F."/>
            <person name="Potier S."/>
            <person name="Purnelle B."/>
            <person name="Rieger M."/>
            <person name="Riles L."/>
            <person name="Rinaldi T."/>
            <person name="Robben J."/>
            <person name="Rodrigues-Pousada C."/>
            <person name="Rodriguez-Belmonte E."/>
            <person name="Rodriguez-Torres A.M."/>
            <person name="Rose M."/>
            <person name="Ruzzi M."/>
            <person name="Saliola M."/>
            <person name="Sanchez-Perez M."/>
            <person name="Schaefer B."/>
            <person name="Schaefer M."/>
            <person name="Scharfe M."/>
            <person name="Schmidheini T."/>
            <person name="Schreer A."/>
            <person name="Skala J."/>
            <person name="Souciet J.-L."/>
            <person name="Steensma H.Y."/>
            <person name="Talla E."/>
            <person name="Thierry A."/>
            <person name="Vandenbol M."/>
            <person name="van der Aart Q.J.M."/>
            <person name="Van Dyck L."/>
            <person name="Vanoni M."/>
            <person name="Verhasselt P."/>
            <person name="Voet M."/>
            <person name="Volckaert G."/>
            <person name="Wambutt R."/>
            <person name="Watson M.D."/>
            <person name="Weber N."/>
            <person name="Wedler E."/>
            <person name="Wedler H."/>
            <person name="Wipfli P."/>
            <person name="Wolf K."/>
            <person name="Wright L.F."/>
            <person name="Zaccaria P."/>
            <person name="Zimmermann M."/>
            <person name="Zollner A."/>
            <person name="Kleine K."/>
        </authorList>
    </citation>
    <scope>NUCLEOTIDE SEQUENCE [LARGE SCALE GENOMIC DNA]</scope>
    <source>
        <strain>ATCC 204508 / S288c</strain>
    </source>
</reference>
<reference key="2">
    <citation type="journal article" date="2014" name="G3 (Bethesda)">
        <title>The reference genome sequence of Saccharomyces cerevisiae: Then and now.</title>
        <authorList>
            <person name="Engel S.R."/>
            <person name="Dietrich F.S."/>
            <person name="Fisk D.G."/>
            <person name="Binkley G."/>
            <person name="Balakrishnan R."/>
            <person name="Costanzo M.C."/>
            <person name="Dwight S.S."/>
            <person name="Hitz B.C."/>
            <person name="Karra K."/>
            <person name="Nash R.S."/>
            <person name="Weng S."/>
            <person name="Wong E.D."/>
            <person name="Lloyd P."/>
            <person name="Skrzypek M.S."/>
            <person name="Miyasato S.R."/>
            <person name="Simison M."/>
            <person name="Cherry J.M."/>
        </authorList>
    </citation>
    <scope>GENOME REANNOTATION</scope>
    <source>
        <strain>ATCC 204508 / S288c</strain>
    </source>
</reference>
<reference key="3">
    <citation type="journal article" date="2015" name="PLoS ONE">
        <title>Small toxic protein encoded on chromosome VII of Saccharomyces cerevisiae.</title>
        <authorList>
            <person name="Makanae K."/>
            <person name="Kintaka R."/>
            <person name="Ishikawa K."/>
            <person name="Moriya H."/>
        </authorList>
    </citation>
    <scope>FUNCTION</scope>
</reference>
<sequence length="57" mass="6660">MNVRGNQCIMSIRVFLKAGESSLSFAIKWLKRFEATTKKNQYIQNGWPLKDGNKKRK</sequence>
<evidence type="ECO:0000269" key="1">
    <source>
    </source>
</evidence>
<evidence type="ECO:0000303" key="2">
    <source>
    </source>
</evidence>
<evidence type="ECO:0000305" key="3"/>
<evidence type="ECO:0000312" key="4">
    <source>
        <dbReference type="SGD" id="S000303806"/>
    </source>
</evidence>
<keyword id="KW-1185">Reference proteome</keyword>
<name>OTO1_YEAST</name>
<comment type="function">
    <text evidence="1">Proetin of unknown function whose overexpression causes growth inhibition. Overexpression increases the expression of ergosterol synthesis genes.</text>
</comment>
<dbReference type="EMBL" id="BK006941">
    <property type="protein sequence ID" value="DAF84567.1"/>
    <property type="molecule type" value="Genomic_DNA"/>
</dbReference>
<dbReference type="RefSeq" id="NP_001382660.1">
    <property type="nucleotide sequence ID" value="NM_001395731.1"/>
</dbReference>
<dbReference type="GeneID" id="65924736"/>
<dbReference type="SGD" id="S000303806">
    <property type="gene designation" value="OTO1"/>
</dbReference>
<dbReference type="InParanoid" id="A0A8D9PH56"/>
<dbReference type="PRO" id="PR:A0A8D9PH56"/>
<dbReference type="Proteomes" id="UP000002311">
    <property type="component" value="Chromosome VII"/>
</dbReference>
<proteinExistence type="predicted"/>
<organism>
    <name type="scientific">Saccharomyces cerevisiae (strain ATCC 204508 / S288c)</name>
    <name type="common">Baker's yeast</name>
    <dbReference type="NCBI Taxonomy" id="559292"/>
    <lineage>
        <taxon>Eukaryota</taxon>
        <taxon>Fungi</taxon>
        <taxon>Dikarya</taxon>
        <taxon>Ascomycota</taxon>
        <taxon>Saccharomycotina</taxon>
        <taxon>Saccharomycetes</taxon>
        <taxon>Saccharomycetales</taxon>
        <taxon>Saccharomycetaceae</taxon>
        <taxon>Saccharomyces</taxon>
    </lineage>
</organism>